<proteinExistence type="inferred from homology"/>
<sequence length="425" mass="49612">MAYFIDRRLNGKNKSMVNRQRFLRRYKSQIKQSIAGAINKRSVTDVESGESVSIPNTDINEPIFHQGRGGMRHRVHPGNDHFVQNDRIERPPSGGGGSSGQGSVSQDGEGEDEFVFQISKDEYLDLLFEDLALPNLQKNQHKQLNEYKTHRSGYTSTGVLVNISVVRSLQNSLVRRTAMTAGKRRAIRLLEAELDRLANSEPVQLLEQEKIRQEIAELRQKIDRVPFIDTFDLRYKNFERRPEPSSQAVIFCLMDVSGSMDQVTKDMAKRFYILLYLFLSRTYKNVDMVYIRHHTQAKEVDEHDFFYSQETGGTIVSSALKLMEEVIKERYDPNQWNIYAAQASDGDNWADDSPLCHDLLANHLLPLVRYYSYIEITRRAHQTLWREYEDLQARFDNFAMQHIRDQEDIYPMFRELFQRQLNESR</sequence>
<evidence type="ECO:0000255" key="1">
    <source>
        <dbReference type="HAMAP-Rule" id="MF_01232"/>
    </source>
</evidence>
<evidence type="ECO:0000256" key="2">
    <source>
        <dbReference type="SAM" id="MobiDB-lite"/>
    </source>
</evidence>
<feature type="chain" id="PRO_1000066884" description="UPF0229 protein SG1344">
    <location>
        <begin position="1"/>
        <end position="425"/>
    </location>
</feature>
<feature type="region of interest" description="Disordered" evidence="2">
    <location>
        <begin position="49"/>
        <end position="109"/>
    </location>
</feature>
<feature type="compositionally biased region" description="Polar residues" evidence="2">
    <location>
        <begin position="50"/>
        <end position="59"/>
    </location>
</feature>
<feature type="compositionally biased region" description="Basic and acidic residues" evidence="2">
    <location>
        <begin position="77"/>
        <end position="90"/>
    </location>
</feature>
<comment type="similarity">
    <text evidence="1">Belongs to the UPF0229 family.</text>
</comment>
<reference key="1">
    <citation type="journal article" date="2006" name="Genome Res.">
        <title>Massive genome erosion and functional adaptations provide insights into the symbiotic lifestyle of Sodalis glossinidius in the tsetse host.</title>
        <authorList>
            <person name="Toh H."/>
            <person name="Weiss B.L."/>
            <person name="Perkin S.A.H."/>
            <person name="Yamashita A."/>
            <person name="Oshima K."/>
            <person name="Hattori M."/>
            <person name="Aksoy S."/>
        </authorList>
    </citation>
    <scope>NUCLEOTIDE SEQUENCE [LARGE SCALE GENOMIC DNA]</scope>
    <source>
        <strain>morsitans</strain>
    </source>
</reference>
<organism>
    <name type="scientific">Sodalis glossinidius (strain morsitans)</name>
    <dbReference type="NCBI Taxonomy" id="343509"/>
    <lineage>
        <taxon>Bacteria</taxon>
        <taxon>Pseudomonadati</taxon>
        <taxon>Pseudomonadota</taxon>
        <taxon>Gammaproteobacteria</taxon>
        <taxon>Enterobacterales</taxon>
        <taxon>Bruguierivoracaceae</taxon>
        <taxon>Sodalis</taxon>
    </lineage>
</organism>
<dbReference type="EMBL" id="AP008232">
    <property type="protein sequence ID" value="BAE74619.1"/>
    <property type="molecule type" value="Genomic_DNA"/>
</dbReference>
<dbReference type="RefSeq" id="WP_011411172.1">
    <property type="nucleotide sequence ID" value="NC_007712.1"/>
</dbReference>
<dbReference type="SMR" id="Q2NTA6"/>
<dbReference type="STRING" id="343509.SG1344"/>
<dbReference type="KEGG" id="sgl:SG1344"/>
<dbReference type="eggNOG" id="COG2718">
    <property type="taxonomic scope" value="Bacteria"/>
</dbReference>
<dbReference type="HOGENOM" id="CLU_049702_0_0_6"/>
<dbReference type="OrthoDB" id="9788289at2"/>
<dbReference type="BioCyc" id="SGLO343509:SGP1_RS11825-MONOMER"/>
<dbReference type="Proteomes" id="UP000001932">
    <property type="component" value="Chromosome"/>
</dbReference>
<dbReference type="HAMAP" id="MF_01232">
    <property type="entry name" value="UPF0229"/>
    <property type="match status" value="1"/>
</dbReference>
<dbReference type="InterPro" id="IPR006698">
    <property type="entry name" value="UPF0229"/>
</dbReference>
<dbReference type="NCBIfam" id="NF003707">
    <property type="entry name" value="PRK05325.1-2"/>
    <property type="match status" value="1"/>
</dbReference>
<dbReference type="NCBIfam" id="NF003708">
    <property type="entry name" value="PRK05325.1-3"/>
    <property type="match status" value="1"/>
</dbReference>
<dbReference type="PANTHER" id="PTHR30510">
    <property type="entry name" value="UPF0229 PROTEIN YEAH"/>
    <property type="match status" value="1"/>
</dbReference>
<dbReference type="PANTHER" id="PTHR30510:SF2">
    <property type="entry name" value="UPF0229 PROTEIN YEAH"/>
    <property type="match status" value="1"/>
</dbReference>
<dbReference type="Pfam" id="PF04285">
    <property type="entry name" value="DUF444"/>
    <property type="match status" value="1"/>
</dbReference>
<protein>
    <recommendedName>
        <fullName evidence="1">UPF0229 protein SG1344</fullName>
    </recommendedName>
</protein>
<accession>Q2NTA6</accession>
<name>Y1344_SODGM</name>
<gene>
    <name type="ordered locus">SG1344</name>
</gene>